<feature type="chain" id="PRO_0000163392" description="Ribosome maturation factor RimM">
    <location>
        <begin position="1"/>
        <end position="170"/>
    </location>
</feature>
<feature type="domain" description="PRC barrel" evidence="1">
    <location>
        <begin position="98"/>
        <end position="170"/>
    </location>
</feature>
<accession>Q5H391</accession>
<gene>
    <name evidence="1" type="primary">rimM</name>
    <name type="ordered locus">XOO1326</name>
</gene>
<sequence>MKQTERRILLGRVVGAFGVKGELKLESWTEPRSAIFRYQPWIVRAPSGQESVINGVRGRDQGKNLIAVFPGVADRDTVEAMHGTEIYVARSALPPPKPDEYYWVDLEELQVETVEGVKLGTVSHLFSTGSNDVVVVRGDRERMIPFVFPDFVKSVDFEANLIVVDWDPDF</sequence>
<evidence type="ECO:0000255" key="1">
    <source>
        <dbReference type="HAMAP-Rule" id="MF_00014"/>
    </source>
</evidence>
<evidence type="ECO:0000305" key="2"/>
<dbReference type="EMBL" id="AE013598">
    <property type="protein sequence ID" value="AAW74580.1"/>
    <property type="status" value="ALT_INIT"/>
    <property type="molecule type" value="Genomic_DNA"/>
</dbReference>
<dbReference type="SMR" id="Q5H391"/>
<dbReference type="STRING" id="291331.XOO1326"/>
<dbReference type="KEGG" id="xoo:XOO1326"/>
<dbReference type="HOGENOM" id="CLU_077636_1_0_6"/>
<dbReference type="Proteomes" id="UP000006735">
    <property type="component" value="Chromosome"/>
</dbReference>
<dbReference type="GO" id="GO:0005737">
    <property type="term" value="C:cytoplasm"/>
    <property type="evidence" value="ECO:0007669"/>
    <property type="project" value="UniProtKB-SubCell"/>
</dbReference>
<dbReference type="GO" id="GO:0005840">
    <property type="term" value="C:ribosome"/>
    <property type="evidence" value="ECO:0007669"/>
    <property type="project" value="InterPro"/>
</dbReference>
<dbReference type="GO" id="GO:0043022">
    <property type="term" value="F:ribosome binding"/>
    <property type="evidence" value="ECO:0007669"/>
    <property type="project" value="InterPro"/>
</dbReference>
<dbReference type="GO" id="GO:0042274">
    <property type="term" value="P:ribosomal small subunit biogenesis"/>
    <property type="evidence" value="ECO:0007669"/>
    <property type="project" value="UniProtKB-UniRule"/>
</dbReference>
<dbReference type="GO" id="GO:0006364">
    <property type="term" value="P:rRNA processing"/>
    <property type="evidence" value="ECO:0007669"/>
    <property type="project" value="UniProtKB-UniRule"/>
</dbReference>
<dbReference type="Gene3D" id="2.30.30.240">
    <property type="entry name" value="PRC-barrel domain"/>
    <property type="match status" value="1"/>
</dbReference>
<dbReference type="Gene3D" id="2.40.30.60">
    <property type="entry name" value="RimM"/>
    <property type="match status" value="1"/>
</dbReference>
<dbReference type="HAMAP" id="MF_00014">
    <property type="entry name" value="Ribosome_mat_RimM"/>
    <property type="match status" value="1"/>
</dbReference>
<dbReference type="InterPro" id="IPR011033">
    <property type="entry name" value="PRC_barrel-like_sf"/>
</dbReference>
<dbReference type="InterPro" id="IPR056792">
    <property type="entry name" value="PRC_RimM"/>
</dbReference>
<dbReference type="InterPro" id="IPR011961">
    <property type="entry name" value="RimM"/>
</dbReference>
<dbReference type="InterPro" id="IPR002676">
    <property type="entry name" value="RimM_N"/>
</dbReference>
<dbReference type="InterPro" id="IPR036976">
    <property type="entry name" value="RimM_N_sf"/>
</dbReference>
<dbReference type="InterPro" id="IPR009000">
    <property type="entry name" value="Transl_B-barrel_sf"/>
</dbReference>
<dbReference type="NCBIfam" id="TIGR02273">
    <property type="entry name" value="16S_RimM"/>
    <property type="match status" value="1"/>
</dbReference>
<dbReference type="PANTHER" id="PTHR33692">
    <property type="entry name" value="RIBOSOME MATURATION FACTOR RIMM"/>
    <property type="match status" value="1"/>
</dbReference>
<dbReference type="PANTHER" id="PTHR33692:SF1">
    <property type="entry name" value="RIBOSOME MATURATION FACTOR RIMM"/>
    <property type="match status" value="1"/>
</dbReference>
<dbReference type="Pfam" id="PF24986">
    <property type="entry name" value="PRC_RimM"/>
    <property type="match status" value="1"/>
</dbReference>
<dbReference type="Pfam" id="PF01782">
    <property type="entry name" value="RimM"/>
    <property type="match status" value="1"/>
</dbReference>
<dbReference type="SUPFAM" id="SSF50346">
    <property type="entry name" value="PRC-barrel domain"/>
    <property type="match status" value="1"/>
</dbReference>
<dbReference type="SUPFAM" id="SSF50447">
    <property type="entry name" value="Translation proteins"/>
    <property type="match status" value="1"/>
</dbReference>
<protein>
    <recommendedName>
        <fullName evidence="1">Ribosome maturation factor RimM</fullName>
    </recommendedName>
</protein>
<keyword id="KW-0143">Chaperone</keyword>
<keyword id="KW-0963">Cytoplasm</keyword>
<keyword id="KW-1185">Reference proteome</keyword>
<keyword id="KW-0690">Ribosome biogenesis</keyword>
<keyword id="KW-0698">rRNA processing</keyword>
<comment type="function">
    <text evidence="1">An accessory protein needed during the final step in the assembly of 30S ribosomal subunit, possibly for assembly of the head region. Essential for efficient processing of 16S rRNA. May be needed both before and after RbfA during the maturation of 16S rRNA. It has affinity for free ribosomal 30S subunits but not for 70S ribosomes.</text>
</comment>
<comment type="subunit">
    <text evidence="1">Binds ribosomal protein uS19.</text>
</comment>
<comment type="subcellular location">
    <subcellularLocation>
        <location evidence="1">Cytoplasm</location>
    </subcellularLocation>
</comment>
<comment type="domain">
    <text evidence="1">The PRC barrel domain binds ribosomal protein uS19.</text>
</comment>
<comment type="similarity">
    <text evidence="1">Belongs to the RimM family.</text>
</comment>
<comment type="sequence caution" evidence="2">
    <conflict type="erroneous initiation">
        <sequence resource="EMBL-CDS" id="AAW74580"/>
    </conflict>
</comment>
<reference key="1">
    <citation type="journal article" date="2005" name="Nucleic Acids Res.">
        <title>The genome sequence of Xanthomonas oryzae pathovar oryzae KACC10331, the bacterial blight pathogen of rice.</title>
        <authorList>
            <person name="Lee B.-M."/>
            <person name="Park Y.-J."/>
            <person name="Park D.-S."/>
            <person name="Kang H.-W."/>
            <person name="Kim J.-G."/>
            <person name="Song E.-S."/>
            <person name="Park I.-C."/>
            <person name="Yoon U.-H."/>
            <person name="Hahn J.-H."/>
            <person name="Koo B.-S."/>
            <person name="Lee G.-B."/>
            <person name="Kim H."/>
            <person name="Park H.-S."/>
            <person name="Yoon K.-O."/>
            <person name="Kim J.-H."/>
            <person name="Jung C.-H."/>
            <person name="Koh N.-H."/>
            <person name="Seo J.-S."/>
            <person name="Go S.-J."/>
        </authorList>
    </citation>
    <scope>NUCLEOTIDE SEQUENCE [LARGE SCALE GENOMIC DNA]</scope>
    <source>
        <strain>KACC10331 / KXO85</strain>
    </source>
</reference>
<organism>
    <name type="scientific">Xanthomonas oryzae pv. oryzae (strain KACC10331 / KXO85)</name>
    <dbReference type="NCBI Taxonomy" id="291331"/>
    <lineage>
        <taxon>Bacteria</taxon>
        <taxon>Pseudomonadati</taxon>
        <taxon>Pseudomonadota</taxon>
        <taxon>Gammaproteobacteria</taxon>
        <taxon>Lysobacterales</taxon>
        <taxon>Lysobacteraceae</taxon>
        <taxon>Xanthomonas</taxon>
    </lineage>
</organism>
<proteinExistence type="inferred from homology"/>
<name>RIMM_XANOR</name>